<dbReference type="EC" id="2.6.1.81" evidence="1"/>
<dbReference type="EMBL" id="AM933172">
    <property type="protein sequence ID" value="CAR33321.1"/>
    <property type="molecule type" value="Genomic_DNA"/>
</dbReference>
<dbReference type="RefSeq" id="WP_000059503.1">
    <property type="nucleotide sequence ID" value="NC_011294.1"/>
</dbReference>
<dbReference type="SMR" id="B5QWJ0"/>
<dbReference type="KEGG" id="set:SEN1740"/>
<dbReference type="HOGENOM" id="CLU_016922_10_1_6"/>
<dbReference type="UniPathway" id="UPA00185">
    <property type="reaction ID" value="UER00281"/>
</dbReference>
<dbReference type="Proteomes" id="UP000000613">
    <property type="component" value="Chromosome"/>
</dbReference>
<dbReference type="GO" id="GO:0042802">
    <property type="term" value="F:identical protein binding"/>
    <property type="evidence" value="ECO:0007669"/>
    <property type="project" value="TreeGrafter"/>
</dbReference>
<dbReference type="GO" id="GO:0030170">
    <property type="term" value="F:pyridoxal phosphate binding"/>
    <property type="evidence" value="ECO:0007669"/>
    <property type="project" value="UniProtKB-UniRule"/>
</dbReference>
<dbReference type="GO" id="GO:0043825">
    <property type="term" value="F:succinylornithine transaminase activity"/>
    <property type="evidence" value="ECO:0007669"/>
    <property type="project" value="UniProtKB-EC"/>
</dbReference>
<dbReference type="GO" id="GO:1901607">
    <property type="term" value="P:alpha-amino acid biosynthetic process"/>
    <property type="evidence" value="ECO:0007669"/>
    <property type="project" value="UniProtKB-ARBA"/>
</dbReference>
<dbReference type="GO" id="GO:0019544">
    <property type="term" value="P:arginine catabolic process to glutamate"/>
    <property type="evidence" value="ECO:0007669"/>
    <property type="project" value="UniProtKB-UniRule"/>
</dbReference>
<dbReference type="GO" id="GO:0019545">
    <property type="term" value="P:arginine catabolic process to succinate"/>
    <property type="evidence" value="ECO:0007669"/>
    <property type="project" value="UniProtKB-UniRule"/>
</dbReference>
<dbReference type="GO" id="GO:0006593">
    <property type="term" value="P:ornithine catabolic process"/>
    <property type="evidence" value="ECO:0007669"/>
    <property type="project" value="InterPro"/>
</dbReference>
<dbReference type="CDD" id="cd00610">
    <property type="entry name" value="OAT_like"/>
    <property type="match status" value="1"/>
</dbReference>
<dbReference type="FunFam" id="3.40.640.10:FF:000004">
    <property type="entry name" value="Acetylornithine aminotransferase"/>
    <property type="match status" value="1"/>
</dbReference>
<dbReference type="Gene3D" id="3.90.1150.10">
    <property type="entry name" value="Aspartate Aminotransferase, domain 1"/>
    <property type="match status" value="1"/>
</dbReference>
<dbReference type="Gene3D" id="3.40.640.10">
    <property type="entry name" value="Type I PLP-dependent aspartate aminotransferase-like (Major domain)"/>
    <property type="match status" value="1"/>
</dbReference>
<dbReference type="HAMAP" id="MF_01107">
    <property type="entry name" value="ArgD_aminotrans_3"/>
    <property type="match status" value="1"/>
</dbReference>
<dbReference type="HAMAP" id="MF_01173">
    <property type="entry name" value="AstC_aminotrans_3"/>
    <property type="match status" value="1"/>
</dbReference>
<dbReference type="InterPro" id="IPR017652">
    <property type="entry name" value="Ac/SucOrn_transaminase_bac"/>
</dbReference>
<dbReference type="InterPro" id="IPR004636">
    <property type="entry name" value="AcOrn/SuccOrn_fam"/>
</dbReference>
<dbReference type="InterPro" id="IPR005814">
    <property type="entry name" value="Aminotrans_3"/>
</dbReference>
<dbReference type="InterPro" id="IPR049704">
    <property type="entry name" value="Aminotrans_3_PPA_site"/>
</dbReference>
<dbReference type="InterPro" id="IPR050103">
    <property type="entry name" value="Class-III_PLP-dep_AT"/>
</dbReference>
<dbReference type="InterPro" id="IPR015424">
    <property type="entry name" value="PyrdxlP-dep_Trfase"/>
</dbReference>
<dbReference type="InterPro" id="IPR015421">
    <property type="entry name" value="PyrdxlP-dep_Trfase_major"/>
</dbReference>
<dbReference type="InterPro" id="IPR015422">
    <property type="entry name" value="PyrdxlP-dep_Trfase_small"/>
</dbReference>
<dbReference type="InterPro" id="IPR001763">
    <property type="entry name" value="Rhodanese-like_dom"/>
</dbReference>
<dbReference type="InterPro" id="IPR026330">
    <property type="entry name" value="SOAT"/>
</dbReference>
<dbReference type="NCBIfam" id="TIGR03246">
    <property type="entry name" value="arg_catab_astC"/>
    <property type="match status" value="1"/>
</dbReference>
<dbReference type="NCBIfam" id="TIGR00707">
    <property type="entry name" value="argD"/>
    <property type="match status" value="1"/>
</dbReference>
<dbReference type="NCBIfam" id="NF002325">
    <property type="entry name" value="PRK01278.1"/>
    <property type="match status" value="1"/>
</dbReference>
<dbReference type="NCBIfam" id="NF003468">
    <property type="entry name" value="PRK05093.1"/>
    <property type="match status" value="1"/>
</dbReference>
<dbReference type="NCBIfam" id="NF009047">
    <property type="entry name" value="PRK12381.1"/>
    <property type="match status" value="1"/>
</dbReference>
<dbReference type="PANTHER" id="PTHR11986">
    <property type="entry name" value="AMINOTRANSFERASE CLASS III"/>
    <property type="match status" value="1"/>
</dbReference>
<dbReference type="PANTHER" id="PTHR11986:SF113">
    <property type="entry name" value="SUCCINYLORNITHINE TRANSAMINASE"/>
    <property type="match status" value="1"/>
</dbReference>
<dbReference type="Pfam" id="PF00202">
    <property type="entry name" value="Aminotran_3"/>
    <property type="match status" value="1"/>
</dbReference>
<dbReference type="PIRSF" id="PIRSF000521">
    <property type="entry name" value="Transaminase_4ab_Lys_Orn"/>
    <property type="match status" value="1"/>
</dbReference>
<dbReference type="SUPFAM" id="SSF53383">
    <property type="entry name" value="PLP-dependent transferases"/>
    <property type="match status" value="1"/>
</dbReference>
<dbReference type="PROSITE" id="PS00600">
    <property type="entry name" value="AA_TRANSFER_CLASS_3"/>
    <property type="match status" value="1"/>
</dbReference>
<proteinExistence type="inferred from homology"/>
<accession>B5QWJ0</accession>
<protein>
    <recommendedName>
        <fullName evidence="1">Succinylornithine transaminase</fullName>
        <ecNumber evidence="1">2.6.1.81</ecNumber>
    </recommendedName>
    <alternativeName>
        <fullName evidence="1">Succinylornithine aminotransferase</fullName>
    </alternativeName>
</protein>
<gene>
    <name evidence="1" type="primary">astC</name>
    <name evidence="1" type="synonym">argM</name>
    <name type="ordered locus">SEN1740</name>
</gene>
<reference key="1">
    <citation type="journal article" date="2008" name="Genome Res.">
        <title>Comparative genome analysis of Salmonella enteritidis PT4 and Salmonella gallinarum 287/91 provides insights into evolutionary and host adaptation pathways.</title>
        <authorList>
            <person name="Thomson N.R."/>
            <person name="Clayton D.J."/>
            <person name="Windhorst D."/>
            <person name="Vernikos G."/>
            <person name="Davidson S."/>
            <person name="Churcher C."/>
            <person name="Quail M.A."/>
            <person name="Stevens M."/>
            <person name="Jones M.A."/>
            <person name="Watson M."/>
            <person name="Barron A."/>
            <person name="Layton A."/>
            <person name="Pickard D."/>
            <person name="Kingsley R.A."/>
            <person name="Bignell A."/>
            <person name="Clark L."/>
            <person name="Harris B."/>
            <person name="Ormond D."/>
            <person name="Abdellah Z."/>
            <person name="Brooks K."/>
            <person name="Cherevach I."/>
            <person name="Chillingworth T."/>
            <person name="Woodward J."/>
            <person name="Norberczak H."/>
            <person name="Lord A."/>
            <person name="Arrowsmith C."/>
            <person name="Jagels K."/>
            <person name="Moule S."/>
            <person name="Mungall K."/>
            <person name="Saunders M."/>
            <person name="Whitehead S."/>
            <person name="Chabalgoity J.A."/>
            <person name="Maskell D."/>
            <person name="Humphreys T."/>
            <person name="Roberts M."/>
            <person name="Barrow P.A."/>
            <person name="Dougan G."/>
            <person name="Parkhill J."/>
        </authorList>
    </citation>
    <scope>NUCLEOTIDE SEQUENCE [LARGE SCALE GENOMIC DNA]</scope>
    <source>
        <strain>P125109</strain>
    </source>
</reference>
<feature type="chain" id="PRO_1000164391" description="Succinylornithine transaminase">
    <location>
        <begin position="1"/>
        <end position="408"/>
    </location>
</feature>
<feature type="modified residue" description="N6-(pyridoxal phosphate)lysine" evidence="1">
    <location>
        <position position="252"/>
    </location>
</feature>
<evidence type="ECO:0000255" key="1">
    <source>
        <dbReference type="HAMAP-Rule" id="MF_01173"/>
    </source>
</evidence>
<keyword id="KW-0032">Aminotransferase</keyword>
<keyword id="KW-0056">Arginine metabolism</keyword>
<keyword id="KW-0663">Pyridoxal phosphate</keyword>
<keyword id="KW-0808">Transferase</keyword>
<sequence>MSLSVTRENFDEWMVPVYVPAPFIPVRGEGSRLWDQQGKEYIDFAGGIAVNALGHAHPALREALNEQANRFWHTGNGYTNEPALRLAKKLIDATFAERVFFCNSGAEANEAALKLARKYAHDRVGNHKSGIVAFKNAFHGRTLFTVSAGGQPTYSQDFAPLPPDIRHAAYNDLNSASALIDDNTCAVIVEPVQGEGGVIPATKAFLQGLRELCDRHQALLIFDEVQTGVGRTGELYAYMHYGVTPDILTTAKALGGGFPIGAMLTTQDYASVMTPGTHGTTYGGNPLATAVAGKVLDIINTPEMQNGVRQRHDAFIERLNTINARFGMFSEIRGLGLLLGCVLQTEFAGKAKLIAQEAAKAGVMVLIAGGDVVRFAPALNVSDEEIATGLDRFALACERLQTGGASCG</sequence>
<organism>
    <name type="scientific">Salmonella enteritidis PT4 (strain P125109)</name>
    <dbReference type="NCBI Taxonomy" id="550537"/>
    <lineage>
        <taxon>Bacteria</taxon>
        <taxon>Pseudomonadati</taxon>
        <taxon>Pseudomonadota</taxon>
        <taxon>Gammaproteobacteria</taxon>
        <taxon>Enterobacterales</taxon>
        <taxon>Enterobacteriaceae</taxon>
        <taxon>Salmonella</taxon>
    </lineage>
</organism>
<name>ASTC_SALEP</name>
<comment type="function">
    <text evidence="1">Catalyzes the transamination of N(2)-succinylornithine and alpha-ketoglutarate into N(2)-succinylglutamate semialdehyde and glutamate. Can also act as an acetylornithine aminotransferase.</text>
</comment>
<comment type="catalytic activity">
    <reaction evidence="1">
        <text>N(2)-succinyl-L-ornithine + 2-oxoglutarate = N-succinyl-L-glutamate 5-semialdehyde + L-glutamate</text>
        <dbReference type="Rhea" id="RHEA:16953"/>
        <dbReference type="ChEBI" id="CHEBI:16810"/>
        <dbReference type="ChEBI" id="CHEBI:29985"/>
        <dbReference type="ChEBI" id="CHEBI:58514"/>
        <dbReference type="ChEBI" id="CHEBI:58520"/>
        <dbReference type="EC" id="2.6.1.81"/>
    </reaction>
</comment>
<comment type="cofactor">
    <cofactor evidence="1">
        <name>pyridoxal 5'-phosphate</name>
        <dbReference type="ChEBI" id="CHEBI:597326"/>
    </cofactor>
</comment>
<comment type="pathway">
    <text evidence="1">Amino-acid degradation; L-arginine degradation via AST pathway; L-glutamate and succinate from L-arginine: step 3/5.</text>
</comment>
<comment type="similarity">
    <text evidence="1">Belongs to the class-III pyridoxal-phosphate-dependent aminotransferase family. AstC subfamily.</text>
</comment>